<keyword id="KW-0131">Cell cycle</keyword>
<keyword id="KW-0132">Cell division</keyword>
<keyword id="KW-0963">Cytoplasm</keyword>
<keyword id="KW-1185">Reference proteome</keyword>
<keyword id="KW-0717">Septation</keyword>
<gene>
    <name evidence="1" type="primary">zapD</name>
    <name type="ordered locus">SF0099</name>
    <name type="ordered locus">S0101</name>
</gene>
<dbReference type="EMBL" id="AE005674">
    <property type="protein sequence ID" value="AAN41764.1"/>
    <property type="molecule type" value="Genomic_DNA"/>
</dbReference>
<dbReference type="EMBL" id="AE014073">
    <property type="protein sequence ID" value="AAP15645.1"/>
    <property type="molecule type" value="Genomic_DNA"/>
</dbReference>
<dbReference type="RefSeq" id="WP_001194738.1">
    <property type="nucleotide sequence ID" value="NZ_WPGW01000007.1"/>
</dbReference>
<dbReference type="SMR" id="Q83MF4"/>
<dbReference type="STRING" id="198214.SF0099"/>
<dbReference type="PaxDb" id="198214-SF0099"/>
<dbReference type="KEGG" id="sfl:SF0099"/>
<dbReference type="KEGG" id="sfx:S0101"/>
<dbReference type="PATRIC" id="fig|198214.7.peg.113"/>
<dbReference type="HOGENOM" id="CLU_076303_0_0_6"/>
<dbReference type="Proteomes" id="UP000001006">
    <property type="component" value="Chromosome"/>
</dbReference>
<dbReference type="Proteomes" id="UP000002673">
    <property type="component" value="Chromosome"/>
</dbReference>
<dbReference type="GO" id="GO:0032153">
    <property type="term" value="C:cell division site"/>
    <property type="evidence" value="ECO:0007669"/>
    <property type="project" value="TreeGrafter"/>
</dbReference>
<dbReference type="GO" id="GO:0005737">
    <property type="term" value="C:cytoplasm"/>
    <property type="evidence" value="ECO:0007669"/>
    <property type="project" value="UniProtKB-SubCell"/>
</dbReference>
<dbReference type="GO" id="GO:0000917">
    <property type="term" value="P:division septum assembly"/>
    <property type="evidence" value="ECO:0007669"/>
    <property type="project" value="UniProtKB-KW"/>
</dbReference>
<dbReference type="GO" id="GO:0043093">
    <property type="term" value="P:FtsZ-dependent cytokinesis"/>
    <property type="evidence" value="ECO:0007669"/>
    <property type="project" value="UniProtKB-UniRule"/>
</dbReference>
<dbReference type="FunFam" id="1.10.3900.10:FF:000001">
    <property type="entry name" value="Cell division protein ZapD"/>
    <property type="match status" value="1"/>
</dbReference>
<dbReference type="FunFam" id="2.60.440.10:FF:000001">
    <property type="entry name" value="Cell division protein ZapD"/>
    <property type="match status" value="1"/>
</dbReference>
<dbReference type="Gene3D" id="1.10.3900.10">
    <property type="entry name" value="YacF-like"/>
    <property type="match status" value="1"/>
</dbReference>
<dbReference type="Gene3D" id="2.60.440.10">
    <property type="entry name" value="YacF-like domains"/>
    <property type="match status" value="1"/>
</dbReference>
<dbReference type="HAMAP" id="MF_01092">
    <property type="entry name" value="ZapD"/>
    <property type="match status" value="1"/>
</dbReference>
<dbReference type="InterPro" id="IPR009777">
    <property type="entry name" value="ZapD"/>
</dbReference>
<dbReference type="InterPro" id="IPR027462">
    <property type="entry name" value="ZapD_C"/>
</dbReference>
<dbReference type="InterPro" id="IPR036268">
    <property type="entry name" value="ZapD_sf"/>
</dbReference>
<dbReference type="NCBIfam" id="NF003653">
    <property type="entry name" value="PRK05287.1-1"/>
    <property type="match status" value="1"/>
</dbReference>
<dbReference type="NCBIfam" id="NF003655">
    <property type="entry name" value="PRK05287.1-3"/>
    <property type="match status" value="1"/>
</dbReference>
<dbReference type="PANTHER" id="PTHR39455">
    <property type="entry name" value="CELL DIVISION PROTEIN ZAPD"/>
    <property type="match status" value="1"/>
</dbReference>
<dbReference type="PANTHER" id="PTHR39455:SF1">
    <property type="entry name" value="CELL DIVISION PROTEIN ZAPD"/>
    <property type="match status" value="1"/>
</dbReference>
<dbReference type="Pfam" id="PF07072">
    <property type="entry name" value="ZapD"/>
    <property type="match status" value="1"/>
</dbReference>
<dbReference type="SUPFAM" id="SSF160950">
    <property type="entry name" value="YacF-like"/>
    <property type="match status" value="1"/>
</dbReference>
<reference key="1">
    <citation type="journal article" date="2002" name="Nucleic Acids Res.">
        <title>Genome sequence of Shigella flexneri 2a: insights into pathogenicity through comparison with genomes of Escherichia coli K12 and O157.</title>
        <authorList>
            <person name="Jin Q."/>
            <person name="Yuan Z."/>
            <person name="Xu J."/>
            <person name="Wang Y."/>
            <person name="Shen Y."/>
            <person name="Lu W."/>
            <person name="Wang J."/>
            <person name="Liu H."/>
            <person name="Yang J."/>
            <person name="Yang F."/>
            <person name="Zhang X."/>
            <person name="Zhang J."/>
            <person name="Yang G."/>
            <person name="Wu H."/>
            <person name="Qu D."/>
            <person name="Dong J."/>
            <person name="Sun L."/>
            <person name="Xue Y."/>
            <person name="Zhao A."/>
            <person name="Gao Y."/>
            <person name="Zhu J."/>
            <person name="Kan B."/>
            <person name="Ding K."/>
            <person name="Chen S."/>
            <person name="Cheng H."/>
            <person name="Yao Z."/>
            <person name="He B."/>
            <person name="Chen R."/>
            <person name="Ma D."/>
            <person name="Qiang B."/>
            <person name="Wen Y."/>
            <person name="Hou Y."/>
            <person name="Yu J."/>
        </authorList>
    </citation>
    <scope>NUCLEOTIDE SEQUENCE [LARGE SCALE GENOMIC DNA]</scope>
    <source>
        <strain>301 / Serotype 2a</strain>
    </source>
</reference>
<reference key="2">
    <citation type="journal article" date="2003" name="Infect. Immun.">
        <title>Complete genome sequence and comparative genomics of Shigella flexneri serotype 2a strain 2457T.</title>
        <authorList>
            <person name="Wei J."/>
            <person name="Goldberg M.B."/>
            <person name="Burland V."/>
            <person name="Venkatesan M.M."/>
            <person name="Deng W."/>
            <person name="Fournier G."/>
            <person name="Mayhew G.F."/>
            <person name="Plunkett G. III"/>
            <person name="Rose D.J."/>
            <person name="Darling A."/>
            <person name="Mau B."/>
            <person name="Perna N.T."/>
            <person name="Payne S.M."/>
            <person name="Runyen-Janecky L.J."/>
            <person name="Zhou S."/>
            <person name="Schwartz D.C."/>
            <person name="Blattner F.R."/>
        </authorList>
    </citation>
    <scope>NUCLEOTIDE SEQUENCE [LARGE SCALE GENOMIC DNA]</scope>
    <source>
        <strain>ATCC 700930 / 2457T / Serotype 2a</strain>
    </source>
</reference>
<comment type="function">
    <text evidence="1">Cell division factor that enhances FtsZ-ring assembly. Directly interacts with FtsZ and promotes bundling of FtsZ protofilaments, with a reduction in FtsZ GTPase activity.</text>
</comment>
<comment type="subunit">
    <text evidence="1">Interacts with FtsZ.</text>
</comment>
<comment type="subcellular location">
    <subcellularLocation>
        <location evidence="1">Cytoplasm</location>
    </subcellularLocation>
    <text evidence="1">Localizes to mid-cell in an FtsZ-dependent manner.</text>
</comment>
<comment type="similarity">
    <text evidence="1">Belongs to the ZapD family.</text>
</comment>
<evidence type="ECO:0000255" key="1">
    <source>
        <dbReference type="HAMAP-Rule" id="MF_01092"/>
    </source>
</evidence>
<evidence type="ECO:0000305" key="2"/>
<name>ZAPD_SHIFL</name>
<sequence length="247" mass="28333">MQTQVLFEHPLNEKMRTWLRIEFLIQQLTVNLPIVDHAGALHFFRNVSELLDVFERGEVRTELLKELNRQQRKLQTWIGVPGVDQSRIEALIQQLKAAVSVLISAPRIGQFLREDRLIALVRQRLSIPGGCCSFDLPTLHIWLHLPQAQRDSQVETWIASLNPLTQALTMVLDLIRQSAPFRKQTSLNGFYQDNGGDADLLRLNLSLDSQLYPQISGHKSRFAIRFMPLDTENGQVPERLDFELACC</sequence>
<organism>
    <name type="scientific">Shigella flexneri</name>
    <dbReference type="NCBI Taxonomy" id="623"/>
    <lineage>
        <taxon>Bacteria</taxon>
        <taxon>Pseudomonadati</taxon>
        <taxon>Pseudomonadota</taxon>
        <taxon>Gammaproteobacteria</taxon>
        <taxon>Enterobacterales</taxon>
        <taxon>Enterobacteriaceae</taxon>
        <taxon>Shigella</taxon>
    </lineage>
</organism>
<protein>
    <recommendedName>
        <fullName evidence="1">Cell division protein ZapD</fullName>
    </recommendedName>
    <alternativeName>
        <fullName evidence="1">Z ring-associated protein D</fullName>
    </alternativeName>
</protein>
<feature type="chain" id="PRO_0000211681" description="Cell division protein ZapD">
    <location>
        <begin position="1"/>
        <end position="247"/>
    </location>
</feature>
<feature type="sequence conflict" description="In Ref. 2; AAP15645." evidence="2" ref="2">
    <original>G</original>
    <variation>A</variation>
    <location>
        <position position="57"/>
    </location>
</feature>
<accession>Q83MF4</accession>
<accession>Q7UDS3</accession>
<proteinExistence type="inferred from homology"/>